<feature type="chain" id="PRO_1000066494" description="FMN-dependent NADH:quinone oxidoreductase">
    <location>
        <begin position="1"/>
        <end position="211"/>
    </location>
</feature>
<feature type="binding site" evidence="1">
    <location>
        <begin position="17"/>
        <end position="19"/>
    </location>
    <ligand>
        <name>FMN</name>
        <dbReference type="ChEBI" id="CHEBI:58210"/>
    </ligand>
</feature>
<keyword id="KW-0285">Flavoprotein</keyword>
<keyword id="KW-0288">FMN</keyword>
<keyword id="KW-0520">NAD</keyword>
<keyword id="KW-0560">Oxidoreductase</keyword>
<name>AZOR_BACVZ</name>
<accession>A7Z8S7</accession>
<comment type="function">
    <text evidence="1">Quinone reductase that provides resistance to thiol-specific stress caused by electrophilic quinones.</text>
</comment>
<comment type="function">
    <text evidence="1">Also exhibits azoreductase activity. Catalyzes the reductive cleavage of the azo bond in aromatic azo compounds to the corresponding amines.</text>
</comment>
<comment type="catalytic activity">
    <reaction evidence="1">
        <text>2 a quinone + NADH + H(+) = 2 a 1,4-benzosemiquinone + NAD(+)</text>
        <dbReference type="Rhea" id="RHEA:65952"/>
        <dbReference type="ChEBI" id="CHEBI:15378"/>
        <dbReference type="ChEBI" id="CHEBI:57540"/>
        <dbReference type="ChEBI" id="CHEBI:57945"/>
        <dbReference type="ChEBI" id="CHEBI:132124"/>
        <dbReference type="ChEBI" id="CHEBI:134225"/>
    </reaction>
</comment>
<comment type="catalytic activity">
    <reaction evidence="1">
        <text>N,N-dimethyl-1,4-phenylenediamine + anthranilate + 2 NAD(+) = 2-(4-dimethylaminophenyl)diazenylbenzoate + 2 NADH + 2 H(+)</text>
        <dbReference type="Rhea" id="RHEA:55872"/>
        <dbReference type="ChEBI" id="CHEBI:15378"/>
        <dbReference type="ChEBI" id="CHEBI:15783"/>
        <dbReference type="ChEBI" id="CHEBI:16567"/>
        <dbReference type="ChEBI" id="CHEBI:57540"/>
        <dbReference type="ChEBI" id="CHEBI:57945"/>
        <dbReference type="ChEBI" id="CHEBI:71579"/>
        <dbReference type="EC" id="1.7.1.17"/>
    </reaction>
</comment>
<comment type="cofactor">
    <cofactor evidence="1">
        <name>FMN</name>
        <dbReference type="ChEBI" id="CHEBI:58210"/>
    </cofactor>
    <text evidence="1">Binds 1 FMN per subunit.</text>
</comment>
<comment type="subunit">
    <text evidence="1">Homodimer.</text>
</comment>
<comment type="similarity">
    <text evidence="1">Belongs to the azoreductase type 1 family.</text>
</comment>
<reference key="1">
    <citation type="journal article" date="2007" name="Nat. Biotechnol.">
        <title>Comparative analysis of the complete genome sequence of the plant growth-promoting bacterium Bacillus amyloliquefaciens FZB42.</title>
        <authorList>
            <person name="Chen X.H."/>
            <person name="Koumoutsi A."/>
            <person name="Scholz R."/>
            <person name="Eisenreich A."/>
            <person name="Schneider K."/>
            <person name="Heinemeyer I."/>
            <person name="Morgenstern B."/>
            <person name="Voss B."/>
            <person name="Hess W.R."/>
            <person name="Reva O."/>
            <person name="Junge H."/>
            <person name="Voigt B."/>
            <person name="Jungblut P.R."/>
            <person name="Vater J."/>
            <person name="Suessmuth R."/>
            <person name="Liesegang H."/>
            <person name="Strittmatter A."/>
            <person name="Gottschalk G."/>
            <person name="Borriss R."/>
        </authorList>
    </citation>
    <scope>NUCLEOTIDE SEQUENCE [LARGE SCALE GENOMIC DNA]</scope>
    <source>
        <strain>DSM 23117 / BGSC 10A6 / LMG 26770 / FZB42</strain>
    </source>
</reference>
<proteinExistence type="inferred from homology"/>
<gene>
    <name evidence="1" type="primary">azoR</name>
    <name type="ordered locus">RBAM_030720</name>
</gene>
<sequence length="211" mass="23350">MAKVLYITAHPHDEKTSYSMATGKAFIDSYKESNPNDEVVHIDLYKENIPHIDADVFSGWGKLQSGTGFEELSENEKAKVGRLNELSDQFAAADKYVFVTPLWNFSFPPVMKAYLDSVAVAGKSFKYTEQGPIGLLTDKKALHIQARGGYYSEGPAADMEMGHRYIGIMMNFFGVPSFDGLIVEGHNAEPNKAQQIKEDAIARAKEAGKSF</sequence>
<protein>
    <recommendedName>
        <fullName evidence="1">FMN-dependent NADH:quinone oxidoreductase</fullName>
        <ecNumber evidence="1">1.6.5.-</ecNumber>
    </recommendedName>
    <alternativeName>
        <fullName evidence="1">Azo-dye reductase</fullName>
    </alternativeName>
    <alternativeName>
        <fullName evidence="1">FMN-dependent NADH-azo compound oxidoreductase</fullName>
    </alternativeName>
    <alternativeName>
        <fullName evidence="1">FMN-dependent NADH-azoreductase</fullName>
        <ecNumber evidence="1">1.7.1.17</ecNumber>
    </alternativeName>
</protein>
<dbReference type="EC" id="1.6.5.-" evidence="1"/>
<dbReference type="EC" id="1.7.1.17" evidence="1"/>
<dbReference type="EMBL" id="CP000560">
    <property type="protein sequence ID" value="ABS75403.1"/>
    <property type="molecule type" value="Genomic_DNA"/>
</dbReference>
<dbReference type="RefSeq" id="WP_012118449.1">
    <property type="nucleotide sequence ID" value="NC_009725.2"/>
</dbReference>
<dbReference type="SMR" id="A7Z8S7"/>
<dbReference type="GeneID" id="93082215"/>
<dbReference type="KEGG" id="bay:RBAM_030720"/>
<dbReference type="HOGENOM" id="CLU_088964_3_1_9"/>
<dbReference type="Proteomes" id="UP000001120">
    <property type="component" value="Chromosome"/>
</dbReference>
<dbReference type="GO" id="GO:0009055">
    <property type="term" value="F:electron transfer activity"/>
    <property type="evidence" value="ECO:0007669"/>
    <property type="project" value="UniProtKB-UniRule"/>
</dbReference>
<dbReference type="GO" id="GO:0010181">
    <property type="term" value="F:FMN binding"/>
    <property type="evidence" value="ECO:0007669"/>
    <property type="project" value="UniProtKB-UniRule"/>
</dbReference>
<dbReference type="GO" id="GO:0016652">
    <property type="term" value="F:oxidoreductase activity, acting on NAD(P)H as acceptor"/>
    <property type="evidence" value="ECO:0007669"/>
    <property type="project" value="UniProtKB-UniRule"/>
</dbReference>
<dbReference type="GO" id="GO:0016655">
    <property type="term" value="F:oxidoreductase activity, acting on NAD(P)H, quinone or similar compound as acceptor"/>
    <property type="evidence" value="ECO:0007669"/>
    <property type="project" value="InterPro"/>
</dbReference>
<dbReference type="Gene3D" id="3.40.50.360">
    <property type="match status" value="1"/>
</dbReference>
<dbReference type="HAMAP" id="MF_01216">
    <property type="entry name" value="Azoreductase_type1"/>
    <property type="match status" value="1"/>
</dbReference>
<dbReference type="InterPro" id="IPR003680">
    <property type="entry name" value="Flavodoxin_fold"/>
</dbReference>
<dbReference type="InterPro" id="IPR029039">
    <property type="entry name" value="Flavoprotein-like_sf"/>
</dbReference>
<dbReference type="InterPro" id="IPR050104">
    <property type="entry name" value="FMN-dep_NADH:Q_OxRdtase_AzoR1"/>
</dbReference>
<dbReference type="InterPro" id="IPR023048">
    <property type="entry name" value="NADH:quinone_OxRdtase_FMN_depd"/>
</dbReference>
<dbReference type="NCBIfam" id="NF010075">
    <property type="entry name" value="PRK13556.1"/>
    <property type="match status" value="1"/>
</dbReference>
<dbReference type="PANTHER" id="PTHR43741">
    <property type="entry name" value="FMN-DEPENDENT NADH-AZOREDUCTASE 1"/>
    <property type="match status" value="1"/>
</dbReference>
<dbReference type="PANTHER" id="PTHR43741:SF7">
    <property type="entry name" value="FMN-DEPENDENT NADH:QUINONE OXIDOREDUCTASE"/>
    <property type="match status" value="1"/>
</dbReference>
<dbReference type="Pfam" id="PF02525">
    <property type="entry name" value="Flavodoxin_2"/>
    <property type="match status" value="1"/>
</dbReference>
<dbReference type="SUPFAM" id="SSF52218">
    <property type="entry name" value="Flavoproteins"/>
    <property type="match status" value="1"/>
</dbReference>
<organism>
    <name type="scientific">Bacillus velezensis (strain DSM 23117 / BGSC 10A6 / LMG 26770 / FZB42)</name>
    <name type="common">Bacillus amyloliquefaciens subsp. plantarum</name>
    <dbReference type="NCBI Taxonomy" id="326423"/>
    <lineage>
        <taxon>Bacteria</taxon>
        <taxon>Bacillati</taxon>
        <taxon>Bacillota</taxon>
        <taxon>Bacilli</taxon>
        <taxon>Bacillales</taxon>
        <taxon>Bacillaceae</taxon>
        <taxon>Bacillus</taxon>
        <taxon>Bacillus amyloliquefaciens group</taxon>
    </lineage>
</organism>
<evidence type="ECO:0000255" key="1">
    <source>
        <dbReference type="HAMAP-Rule" id="MF_01216"/>
    </source>
</evidence>